<feature type="chain" id="PRO_0000298482" description="NADH-quinone oxidoreductase subunit I">
    <location>
        <begin position="1"/>
        <end position="162"/>
    </location>
</feature>
<feature type="domain" description="4Fe-4S ferredoxin-type 1" evidence="1">
    <location>
        <begin position="52"/>
        <end position="82"/>
    </location>
</feature>
<feature type="domain" description="4Fe-4S ferredoxin-type 2" evidence="1">
    <location>
        <begin position="93"/>
        <end position="122"/>
    </location>
</feature>
<feature type="binding site" evidence="1">
    <location>
        <position position="62"/>
    </location>
    <ligand>
        <name>[4Fe-4S] cluster</name>
        <dbReference type="ChEBI" id="CHEBI:49883"/>
        <label>1</label>
    </ligand>
</feature>
<feature type="binding site" evidence="1">
    <location>
        <position position="65"/>
    </location>
    <ligand>
        <name>[4Fe-4S] cluster</name>
        <dbReference type="ChEBI" id="CHEBI:49883"/>
        <label>1</label>
    </ligand>
</feature>
<feature type="binding site" evidence="1">
    <location>
        <position position="68"/>
    </location>
    <ligand>
        <name>[4Fe-4S] cluster</name>
        <dbReference type="ChEBI" id="CHEBI:49883"/>
        <label>1</label>
    </ligand>
</feature>
<feature type="binding site" evidence="1">
    <location>
        <position position="72"/>
    </location>
    <ligand>
        <name>[4Fe-4S] cluster</name>
        <dbReference type="ChEBI" id="CHEBI:49883"/>
        <label>2</label>
    </ligand>
</feature>
<feature type="binding site" evidence="1">
    <location>
        <position position="102"/>
    </location>
    <ligand>
        <name>[4Fe-4S] cluster</name>
        <dbReference type="ChEBI" id="CHEBI:49883"/>
        <label>2</label>
    </ligand>
</feature>
<feature type="binding site" evidence="1">
    <location>
        <position position="105"/>
    </location>
    <ligand>
        <name>[4Fe-4S] cluster</name>
        <dbReference type="ChEBI" id="CHEBI:49883"/>
        <label>2</label>
    </ligand>
</feature>
<feature type="binding site" evidence="1">
    <location>
        <position position="108"/>
    </location>
    <ligand>
        <name>[4Fe-4S] cluster</name>
        <dbReference type="ChEBI" id="CHEBI:49883"/>
        <label>2</label>
    </ligand>
</feature>
<feature type="binding site" evidence="1">
    <location>
        <position position="112"/>
    </location>
    <ligand>
        <name>[4Fe-4S] cluster</name>
        <dbReference type="ChEBI" id="CHEBI:49883"/>
        <label>1</label>
    </ligand>
</feature>
<protein>
    <recommendedName>
        <fullName evidence="1">NADH-quinone oxidoreductase subunit I</fullName>
        <ecNumber evidence="1">7.1.1.-</ecNumber>
    </recommendedName>
    <alternativeName>
        <fullName evidence="1">NADH dehydrogenase I subunit I</fullName>
    </alternativeName>
    <alternativeName>
        <fullName evidence="1">NDH-1 subunit I</fullName>
    </alternativeName>
</protein>
<proteinExistence type="inferred from homology"/>
<comment type="function">
    <text evidence="1">NDH-1 shuttles electrons from NADH, via FMN and iron-sulfur (Fe-S) centers, to quinones in the respiratory chain. The immediate electron acceptor for the enzyme in this species is believed to be ubiquinone. Couples the redox reaction to proton translocation (for every two electrons transferred, four hydrogen ions are translocated across the cytoplasmic membrane), and thus conserves the redox energy in a proton gradient.</text>
</comment>
<comment type="catalytic activity">
    <reaction evidence="1">
        <text>a quinone + NADH + 5 H(+)(in) = a quinol + NAD(+) + 4 H(+)(out)</text>
        <dbReference type="Rhea" id="RHEA:57888"/>
        <dbReference type="ChEBI" id="CHEBI:15378"/>
        <dbReference type="ChEBI" id="CHEBI:24646"/>
        <dbReference type="ChEBI" id="CHEBI:57540"/>
        <dbReference type="ChEBI" id="CHEBI:57945"/>
        <dbReference type="ChEBI" id="CHEBI:132124"/>
    </reaction>
</comment>
<comment type="cofactor">
    <cofactor evidence="1">
        <name>[4Fe-4S] cluster</name>
        <dbReference type="ChEBI" id="CHEBI:49883"/>
    </cofactor>
    <text evidence="1">Binds 2 [4Fe-4S] clusters per subunit.</text>
</comment>
<comment type="subunit">
    <text evidence="1">NDH-1 is composed of 14 different subunits. Subunits NuoA, H, J, K, L, M, N constitute the membrane sector of the complex.</text>
</comment>
<comment type="subcellular location">
    <subcellularLocation>
        <location evidence="1">Cell inner membrane</location>
        <topology evidence="1">Peripheral membrane protein</topology>
    </subcellularLocation>
</comment>
<comment type="similarity">
    <text evidence="1">Belongs to the complex I 23 kDa subunit family.</text>
</comment>
<organism>
    <name type="scientific">Bradyrhizobium sp. (strain BTAi1 / ATCC BAA-1182)</name>
    <dbReference type="NCBI Taxonomy" id="288000"/>
    <lineage>
        <taxon>Bacteria</taxon>
        <taxon>Pseudomonadati</taxon>
        <taxon>Pseudomonadota</taxon>
        <taxon>Alphaproteobacteria</taxon>
        <taxon>Hyphomicrobiales</taxon>
        <taxon>Nitrobacteraceae</taxon>
        <taxon>Bradyrhizobium</taxon>
    </lineage>
</organism>
<evidence type="ECO:0000255" key="1">
    <source>
        <dbReference type="HAMAP-Rule" id="MF_01351"/>
    </source>
</evidence>
<accession>A5EK90</accession>
<reference key="1">
    <citation type="journal article" date="2007" name="Science">
        <title>Legumes symbioses: absence of nod genes in photosynthetic bradyrhizobia.</title>
        <authorList>
            <person name="Giraud E."/>
            <person name="Moulin L."/>
            <person name="Vallenet D."/>
            <person name="Barbe V."/>
            <person name="Cytryn E."/>
            <person name="Avarre J.-C."/>
            <person name="Jaubert M."/>
            <person name="Simon D."/>
            <person name="Cartieaux F."/>
            <person name="Prin Y."/>
            <person name="Bena G."/>
            <person name="Hannibal L."/>
            <person name="Fardoux J."/>
            <person name="Kojadinovic M."/>
            <person name="Vuillet L."/>
            <person name="Lajus A."/>
            <person name="Cruveiller S."/>
            <person name="Rouy Z."/>
            <person name="Mangenot S."/>
            <person name="Segurens B."/>
            <person name="Dossat C."/>
            <person name="Franck W.L."/>
            <person name="Chang W.-S."/>
            <person name="Saunders E."/>
            <person name="Bruce D."/>
            <person name="Richardson P."/>
            <person name="Normand P."/>
            <person name="Dreyfus B."/>
            <person name="Pignol D."/>
            <person name="Stacey G."/>
            <person name="Emerich D."/>
            <person name="Vermeglio A."/>
            <person name="Medigue C."/>
            <person name="Sadowsky M."/>
        </authorList>
    </citation>
    <scope>NUCLEOTIDE SEQUENCE [LARGE SCALE GENOMIC DNA]</scope>
    <source>
        <strain>BTAi1 / ATCC BAA-1182</strain>
    </source>
</reference>
<dbReference type="EC" id="7.1.1.-" evidence="1"/>
<dbReference type="EMBL" id="CP000494">
    <property type="protein sequence ID" value="ABQ36584.1"/>
    <property type="molecule type" value="Genomic_DNA"/>
</dbReference>
<dbReference type="RefSeq" id="WP_012044579.1">
    <property type="nucleotide sequence ID" value="NC_009485.1"/>
</dbReference>
<dbReference type="SMR" id="A5EK90"/>
<dbReference type="STRING" id="288000.BBta_4553"/>
<dbReference type="KEGG" id="bbt:BBta_4553"/>
<dbReference type="eggNOG" id="COG1143">
    <property type="taxonomic scope" value="Bacteria"/>
</dbReference>
<dbReference type="HOGENOM" id="CLU_067218_5_1_5"/>
<dbReference type="OrthoDB" id="9808559at2"/>
<dbReference type="Proteomes" id="UP000000246">
    <property type="component" value="Chromosome"/>
</dbReference>
<dbReference type="GO" id="GO:0005886">
    <property type="term" value="C:plasma membrane"/>
    <property type="evidence" value="ECO:0007669"/>
    <property type="project" value="UniProtKB-SubCell"/>
</dbReference>
<dbReference type="GO" id="GO:0051539">
    <property type="term" value="F:4 iron, 4 sulfur cluster binding"/>
    <property type="evidence" value="ECO:0007669"/>
    <property type="project" value="UniProtKB-KW"/>
</dbReference>
<dbReference type="GO" id="GO:0005506">
    <property type="term" value="F:iron ion binding"/>
    <property type="evidence" value="ECO:0007669"/>
    <property type="project" value="UniProtKB-UniRule"/>
</dbReference>
<dbReference type="GO" id="GO:0050136">
    <property type="term" value="F:NADH:ubiquinone reductase (non-electrogenic) activity"/>
    <property type="evidence" value="ECO:0007669"/>
    <property type="project" value="UniProtKB-UniRule"/>
</dbReference>
<dbReference type="GO" id="GO:0048038">
    <property type="term" value="F:quinone binding"/>
    <property type="evidence" value="ECO:0007669"/>
    <property type="project" value="UniProtKB-KW"/>
</dbReference>
<dbReference type="GO" id="GO:0009060">
    <property type="term" value="P:aerobic respiration"/>
    <property type="evidence" value="ECO:0007669"/>
    <property type="project" value="TreeGrafter"/>
</dbReference>
<dbReference type="FunFam" id="3.30.70.3270:FF:000001">
    <property type="entry name" value="NADH-quinone oxidoreductase subunit I 1"/>
    <property type="match status" value="1"/>
</dbReference>
<dbReference type="Gene3D" id="3.30.70.3270">
    <property type="match status" value="1"/>
</dbReference>
<dbReference type="HAMAP" id="MF_01351">
    <property type="entry name" value="NDH1_NuoI"/>
    <property type="match status" value="1"/>
</dbReference>
<dbReference type="InterPro" id="IPR017896">
    <property type="entry name" value="4Fe4S_Fe-S-bd"/>
</dbReference>
<dbReference type="InterPro" id="IPR017900">
    <property type="entry name" value="4Fe4S_Fe_S_CS"/>
</dbReference>
<dbReference type="InterPro" id="IPR010226">
    <property type="entry name" value="NADH_quinone_OxRdtase_chainI"/>
</dbReference>
<dbReference type="NCBIfam" id="TIGR01971">
    <property type="entry name" value="NuoI"/>
    <property type="match status" value="1"/>
</dbReference>
<dbReference type="NCBIfam" id="NF004538">
    <property type="entry name" value="PRK05888.1-4"/>
    <property type="match status" value="1"/>
</dbReference>
<dbReference type="NCBIfam" id="NF004539">
    <property type="entry name" value="PRK05888.1-5"/>
    <property type="match status" value="1"/>
</dbReference>
<dbReference type="PANTHER" id="PTHR10849:SF20">
    <property type="entry name" value="NADH DEHYDROGENASE [UBIQUINONE] IRON-SULFUR PROTEIN 8, MITOCHONDRIAL"/>
    <property type="match status" value="1"/>
</dbReference>
<dbReference type="PANTHER" id="PTHR10849">
    <property type="entry name" value="NADH DEHYDROGENASE UBIQUINONE IRON-SULFUR PROTEIN 8, MITOCHONDRIAL"/>
    <property type="match status" value="1"/>
</dbReference>
<dbReference type="Pfam" id="PF12838">
    <property type="entry name" value="Fer4_7"/>
    <property type="match status" value="1"/>
</dbReference>
<dbReference type="SUPFAM" id="SSF54862">
    <property type="entry name" value="4Fe-4S ferredoxins"/>
    <property type="match status" value="1"/>
</dbReference>
<dbReference type="PROSITE" id="PS00198">
    <property type="entry name" value="4FE4S_FER_1"/>
    <property type="match status" value="2"/>
</dbReference>
<dbReference type="PROSITE" id="PS51379">
    <property type="entry name" value="4FE4S_FER_2"/>
    <property type="match status" value="2"/>
</dbReference>
<name>NUOI_BRASB</name>
<sequence length="162" mass="18516">MNISATARSLLLSEFVSAFFLAMRYFFQPKPTLNYPFEKGPISPRFRGEHALRRYPNGEERCIACKLCEAVCPAQAITIEAGPRRNDGTRRTVRYDIDMVKCIYCGLCQEACPVDAIVEGPNFEFATETREELYYDKAKLLANGDRWEREISKAIALDAPYR</sequence>
<keyword id="KW-0004">4Fe-4S</keyword>
<keyword id="KW-0997">Cell inner membrane</keyword>
<keyword id="KW-1003">Cell membrane</keyword>
<keyword id="KW-0408">Iron</keyword>
<keyword id="KW-0411">Iron-sulfur</keyword>
<keyword id="KW-0472">Membrane</keyword>
<keyword id="KW-0479">Metal-binding</keyword>
<keyword id="KW-0520">NAD</keyword>
<keyword id="KW-0874">Quinone</keyword>
<keyword id="KW-1185">Reference proteome</keyword>
<keyword id="KW-0677">Repeat</keyword>
<keyword id="KW-1278">Translocase</keyword>
<keyword id="KW-0830">Ubiquinone</keyword>
<gene>
    <name evidence="1" type="primary">nuoI</name>
    <name type="ordered locus">BBta_4553</name>
</gene>